<evidence type="ECO:0000255" key="1">
    <source>
        <dbReference type="HAMAP-Rule" id="MF_01012"/>
    </source>
</evidence>
<gene>
    <name evidence="1" type="primary">rlmC</name>
    <name type="synonym">rumB</name>
    <name type="ordered locus">SO_0980</name>
</gene>
<dbReference type="EC" id="2.1.1.189" evidence="1"/>
<dbReference type="EMBL" id="AE014299">
    <property type="protein sequence ID" value="AAN54054.2"/>
    <property type="molecule type" value="Genomic_DNA"/>
</dbReference>
<dbReference type="RefSeq" id="NP_716609.2">
    <property type="nucleotide sequence ID" value="NC_004347.2"/>
</dbReference>
<dbReference type="RefSeq" id="WP_011071254.1">
    <property type="nucleotide sequence ID" value="NC_004347.2"/>
</dbReference>
<dbReference type="SMR" id="Q8EI67"/>
<dbReference type="STRING" id="211586.SO_0980"/>
<dbReference type="PaxDb" id="211586-SO_0980"/>
<dbReference type="KEGG" id="son:SO_0980"/>
<dbReference type="PATRIC" id="fig|211586.12.peg.939"/>
<dbReference type="eggNOG" id="COG2265">
    <property type="taxonomic scope" value="Bacteria"/>
</dbReference>
<dbReference type="HOGENOM" id="CLU_014689_0_0_6"/>
<dbReference type="OrthoDB" id="9804590at2"/>
<dbReference type="PhylomeDB" id="Q8EI67"/>
<dbReference type="BioCyc" id="SONE211586:G1GMP-912-MONOMER"/>
<dbReference type="Proteomes" id="UP000008186">
    <property type="component" value="Chromosome"/>
</dbReference>
<dbReference type="GO" id="GO:0051539">
    <property type="term" value="F:4 iron, 4 sulfur cluster binding"/>
    <property type="evidence" value="ECO:0007669"/>
    <property type="project" value="UniProtKB-KW"/>
</dbReference>
<dbReference type="GO" id="GO:0005506">
    <property type="term" value="F:iron ion binding"/>
    <property type="evidence" value="ECO:0007669"/>
    <property type="project" value="UniProtKB-UniRule"/>
</dbReference>
<dbReference type="GO" id="GO:0070041">
    <property type="term" value="F:rRNA (uridine-C5-)-methyltransferase activity"/>
    <property type="evidence" value="ECO:0000318"/>
    <property type="project" value="GO_Central"/>
</dbReference>
<dbReference type="GO" id="GO:0070475">
    <property type="term" value="P:rRNA base methylation"/>
    <property type="evidence" value="ECO:0000318"/>
    <property type="project" value="GO_Central"/>
</dbReference>
<dbReference type="CDD" id="cd02440">
    <property type="entry name" value="AdoMet_MTases"/>
    <property type="match status" value="1"/>
</dbReference>
<dbReference type="FunFam" id="2.40.50.1070:FF:000002">
    <property type="entry name" value="23S rRNA (uracil(747)-C(5))-methyltransferase RlmC"/>
    <property type="match status" value="1"/>
</dbReference>
<dbReference type="Gene3D" id="2.40.50.1070">
    <property type="match status" value="1"/>
</dbReference>
<dbReference type="Gene3D" id="3.40.50.150">
    <property type="entry name" value="Vaccinia Virus protein VP39"/>
    <property type="match status" value="1"/>
</dbReference>
<dbReference type="HAMAP" id="MF_01012">
    <property type="entry name" value="23SrRNA_methyltr_RlmC"/>
    <property type="match status" value="1"/>
</dbReference>
<dbReference type="InterPro" id="IPR011825">
    <property type="entry name" value="23SrRNA_MeTrfase_RlmC"/>
</dbReference>
<dbReference type="InterPro" id="IPR030390">
    <property type="entry name" value="MeTrfase_TrmA_AS"/>
</dbReference>
<dbReference type="InterPro" id="IPR030391">
    <property type="entry name" value="MeTrfase_TrmA_CS"/>
</dbReference>
<dbReference type="InterPro" id="IPR029063">
    <property type="entry name" value="SAM-dependent_MTases_sf"/>
</dbReference>
<dbReference type="InterPro" id="IPR010280">
    <property type="entry name" value="U5_MeTrfase_fam"/>
</dbReference>
<dbReference type="NCBIfam" id="TIGR02085">
    <property type="entry name" value="meth_trns_rumB"/>
    <property type="match status" value="1"/>
</dbReference>
<dbReference type="NCBIfam" id="TIGR00479">
    <property type="entry name" value="rumA"/>
    <property type="match status" value="1"/>
</dbReference>
<dbReference type="PANTHER" id="PTHR11061">
    <property type="entry name" value="RNA M5U METHYLTRANSFERASE"/>
    <property type="match status" value="1"/>
</dbReference>
<dbReference type="PANTHER" id="PTHR11061:SF30">
    <property type="entry name" value="TRNA (URACIL(54)-C(5))-METHYLTRANSFERASE"/>
    <property type="match status" value="1"/>
</dbReference>
<dbReference type="Pfam" id="PF05958">
    <property type="entry name" value="tRNA_U5-meth_tr"/>
    <property type="match status" value="1"/>
</dbReference>
<dbReference type="SUPFAM" id="SSF53335">
    <property type="entry name" value="S-adenosyl-L-methionine-dependent methyltransferases"/>
    <property type="match status" value="1"/>
</dbReference>
<dbReference type="PROSITE" id="PS51687">
    <property type="entry name" value="SAM_MT_RNA_M5U"/>
    <property type="match status" value="1"/>
</dbReference>
<dbReference type="PROSITE" id="PS01230">
    <property type="entry name" value="TRMA_1"/>
    <property type="match status" value="1"/>
</dbReference>
<dbReference type="PROSITE" id="PS01231">
    <property type="entry name" value="TRMA_2"/>
    <property type="match status" value="1"/>
</dbReference>
<name>RLMC_SHEON</name>
<protein>
    <recommendedName>
        <fullName evidence="1">23S rRNA (uracil(747)-C(5))-methyltransferase RlmC</fullName>
        <ecNumber evidence="1">2.1.1.189</ecNumber>
    </recommendedName>
    <alternativeName>
        <fullName evidence="1">23S rRNA(m5U747)-methyltransferase</fullName>
    </alternativeName>
</protein>
<sequence length="386" mass="43033">MSTLVQCGYFERGQCQSCRHIKLPMVQQLAAKTQELQQLLAPFVVSTNTQFLPPVVGEDSGFRNKAKMVVLGAAHAPVLGIVSPNGEAVSLCDCLLYPADMQALLYRLERFVQQAGIPPYRIDKAKGELKYILLTRSQVRGEYMLRFVLRSPDAIARIERELPALMAEYPQINVVSVNIQPIHMAILEGDEEIFLTENTRLEERFNDVPLFIRPKSFFQTNPHVAAKLYQTAREWVGEFAPKSLWDLFCGVGGFGLHCASKDIPLTGIEIEAEAIACAKMSAQMMGLDNVQFMALDSTDFAKGDAAATKPDLIIVNPPRRGIGESLCDALSEFAPRAILYSSCNPKTLAKDLVHIRGYQLTRVQLFDLFPHSDHFEVLAMLVKDSR</sequence>
<reference key="1">
    <citation type="journal article" date="2002" name="Nat. Biotechnol.">
        <title>Genome sequence of the dissimilatory metal ion-reducing bacterium Shewanella oneidensis.</title>
        <authorList>
            <person name="Heidelberg J.F."/>
            <person name="Paulsen I.T."/>
            <person name="Nelson K.E."/>
            <person name="Gaidos E.J."/>
            <person name="Nelson W.C."/>
            <person name="Read T.D."/>
            <person name="Eisen J.A."/>
            <person name="Seshadri R."/>
            <person name="Ward N.L."/>
            <person name="Methe B.A."/>
            <person name="Clayton R.A."/>
            <person name="Meyer T."/>
            <person name="Tsapin A."/>
            <person name="Scott J."/>
            <person name="Beanan M.J."/>
            <person name="Brinkac L.M."/>
            <person name="Daugherty S.C."/>
            <person name="DeBoy R.T."/>
            <person name="Dodson R.J."/>
            <person name="Durkin A.S."/>
            <person name="Haft D.H."/>
            <person name="Kolonay J.F."/>
            <person name="Madupu R."/>
            <person name="Peterson J.D."/>
            <person name="Umayam L.A."/>
            <person name="White O."/>
            <person name="Wolf A.M."/>
            <person name="Vamathevan J.J."/>
            <person name="Weidman J.F."/>
            <person name="Impraim M."/>
            <person name="Lee K."/>
            <person name="Berry K.J."/>
            <person name="Lee C."/>
            <person name="Mueller J."/>
            <person name="Khouri H.M."/>
            <person name="Gill J."/>
            <person name="Utterback T.R."/>
            <person name="McDonald L.A."/>
            <person name="Feldblyum T.V."/>
            <person name="Smith H.O."/>
            <person name="Venter J.C."/>
            <person name="Nealson K.H."/>
            <person name="Fraser C.M."/>
        </authorList>
    </citation>
    <scope>NUCLEOTIDE SEQUENCE [LARGE SCALE GENOMIC DNA]</scope>
    <source>
        <strain>ATCC 700550 / JCM 31522 / CIP 106686 / LMG 19005 / NCIMB 14063 / MR-1</strain>
    </source>
</reference>
<comment type="function">
    <text evidence="1">Catalyzes the formation of 5-methyl-uridine at position 747 (m5U747) in 23S rRNA.</text>
</comment>
<comment type="catalytic activity">
    <reaction evidence="1">
        <text>uridine(747) in 23S rRNA + S-adenosyl-L-methionine = 5-methyluridine(747) in 23S rRNA + S-adenosyl-L-homocysteine + H(+)</text>
        <dbReference type="Rhea" id="RHEA:42628"/>
        <dbReference type="Rhea" id="RHEA-COMP:10154"/>
        <dbReference type="Rhea" id="RHEA-COMP:10155"/>
        <dbReference type="ChEBI" id="CHEBI:15378"/>
        <dbReference type="ChEBI" id="CHEBI:57856"/>
        <dbReference type="ChEBI" id="CHEBI:59789"/>
        <dbReference type="ChEBI" id="CHEBI:65315"/>
        <dbReference type="ChEBI" id="CHEBI:74447"/>
        <dbReference type="EC" id="2.1.1.189"/>
    </reaction>
</comment>
<comment type="similarity">
    <text evidence="1">Belongs to the class I-like SAM-binding methyltransferase superfamily. RNA M5U methyltransferase family. RlmC subfamily.</text>
</comment>
<organism>
    <name type="scientific">Shewanella oneidensis (strain ATCC 700550 / JCM 31522 / CIP 106686 / LMG 19005 / NCIMB 14063 / MR-1)</name>
    <dbReference type="NCBI Taxonomy" id="211586"/>
    <lineage>
        <taxon>Bacteria</taxon>
        <taxon>Pseudomonadati</taxon>
        <taxon>Pseudomonadota</taxon>
        <taxon>Gammaproteobacteria</taxon>
        <taxon>Alteromonadales</taxon>
        <taxon>Shewanellaceae</taxon>
        <taxon>Shewanella</taxon>
    </lineage>
</organism>
<feature type="chain" id="PRO_0000161936" description="23S rRNA (uracil(747)-C(5))-methyltransferase RlmC">
    <location>
        <begin position="1"/>
        <end position="386"/>
    </location>
</feature>
<feature type="active site" description="Nucleophile" evidence="1">
    <location>
        <position position="343"/>
    </location>
</feature>
<feature type="binding site" evidence="1">
    <location>
        <position position="7"/>
    </location>
    <ligand>
        <name>[4Fe-4S] cluster</name>
        <dbReference type="ChEBI" id="CHEBI:49883"/>
    </ligand>
</feature>
<feature type="binding site" evidence="1">
    <location>
        <position position="15"/>
    </location>
    <ligand>
        <name>[4Fe-4S] cluster</name>
        <dbReference type="ChEBI" id="CHEBI:49883"/>
    </ligand>
</feature>
<feature type="binding site" evidence="1">
    <location>
        <position position="18"/>
    </location>
    <ligand>
        <name>[4Fe-4S] cluster</name>
        <dbReference type="ChEBI" id="CHEBI:49883"/>
    </ligand>
</feature>
<feature type="binding site" evidence="1">
    <location>
        <position position="94"/>
    </location>
    <ligand>
        <name>[4Fe-4S] cluster</name>
        <dbReference type="ChEBI" id="CHEBI:49883"/>
    </ligand>
</feature>
<feature type="binding site" evidence="1">
    <location>
        <position position="219"/>
    </location>
    <ligand>
        <name>S-adenosyl-L-methionine</name>
        <dbReference type="ChEBI" id="CHEBI:59789"/>
    </ligand>
</feature>
<feature type="binding site" evidence="1">
    <location>
        <position position="248"/>
    </location>
    <ligand>
        <name>S-adenosyl-L-methionine</name>
        <dbReference type="ChEBI" id="CHEBI:59789"/>
    </ligand>
</feature>
<feature type="binding site" evidence="1">
    <location>
        <position position="269"/>
    </location>
    <ligand>
        <name>S-adenosyl-L-methionine</name>
        <dbReference type="ChEBI" id="CHEBI:59789"/>
    </ligand>
</feature>
<feature type="binding site" evidence="1">
    <location>
        <position position="316"/>
    </location>
    <ligand>
        <name>S-adenosyl-L-methionine</name>
        <dbReference type="ChEBI" id="CHEBI:59789"/>
    </ligand>
</feature>
<proteinExistence type="inferred from homology"/>
<keyword id="KW-0004">4Fe-4S</keyword>
<keyword id="KW-0408">Iron</keyword>
<keyword id="KW-0411">Iron-sulfur</keyword>
<keyword id="KW-0479">Metal-binding</keyword>
<keyword id="KW-0489">Methyltransferase</keyword>
<keyword id="KW-1185">Reference proteome</keyword>
<keyword id="KW-0698">rRNA processing</keyword>
<keyword id="KW-0949">S-adenosyl-L-methionine</keyword>
<keyword id="KW-0808">Transferase</keyword>
<accession>Q8EI67</accession>